<comment type="function">
    <text evidence="1">Catalyzes the first step in the D-alanylation of lipoteichoic acid (LTA), the activation of D-alanine and its transfer onto the D-alanyl carrier protein (Dcp) DltC. In an ATP-dependent two-step reaction, forms a high energy D-alanyl-AMP intermediate, followed by transfer of the D-alanyl residue as a thiol ester to the phosphopantheinyl prosthetic group of the Dcp. D-alanylation of LTA plays an important role in modulating the properties of the cell wall in Gram-positive bacteria, influencing the net charge of the cell wall.</text>
</comment>
<comment type="catalytic activity">
    <reaction evidence="1">
        <text>holo-[D-alanyl-carrier protein] + D-alanine + ATP = D-alanyl-[D-alanyl-carrier protein] + AMP + diphosphate</text>
        <dbReference type="Rhea" id="RHEA:55132"/>
        <dbReference type="Rhea" id="RHEA-COMP:14102"/>
        <dbReference type="Rhea" id="RHEA-COMP:14103"/>
        <dbReference type="ChEBI" id="CHEBI:30616"/>
        <dbReference type="ChEBI" id="CHEBI:33019"/>
        <dbReference type="ChEBI" id="CHEBI:57416"/>
        <dbReference type="ChEBI" id="CHEBI:64479"/>
        <dbReference type="ChEBI" id="CHEBI:138620"/>
        <dbReference type="ChEBI" id="CHEBI:456215"/>
        <dbReference type="EC" id="6.2.1.54"/>
    </reaction>
</comment>
<comment type="pathway">
    <text evidence="1">Cell wall biogenesis; lipoteichoic acid biosynthesis.</text>
</comment>
<comment type="subcellular location">
    <subcellularLocation>
        <location evidence="1">Cytoplasm</location>
    </subcellularLocation>
</comment>
<comment type="similarity">
    <text evidence="1">Belongs to the ATP-dependent AMP-binding enzyme family. DltA subfamily.</text>
</comment>
<organism>
    <name type="scientific">Streptococcus pneumoniae (strain P1031)</name>
    <dbReference type="NCBI Taxonomy" id="488223"/>
    <lineage>
        <taxon>Bacteria</taxon>
        <taxon>Bacillati</taxon>
        <taxon>Bacillota</taxon>
        <taxon>Bacilli</taxon>
        <taxon>Lactobacillales</taxon>
        <taxon>Streptococcaceae</taxon>
        <taxon>Streptococcus</taxon>
    </lineage>
</organism>
<evidence type="ECO:0000255" key="1">
    <source>
        <dbReference type="HAMAP-Rule" id="MF_00593"/>
    </source>
</evidence>
<dbReference type="EC" id="6.2.1.54" evidence="1"/>
<dbReference type="EMBL" id="CP000920">
    <property type="protein sequence ID" value="ACO21603.1"/>
    <property type="molecule type" value="Genomic_DNA"/>
</dbReference>
<dbReference type="RefSeq" id="WP_000066732.1">
    <property type="nucleotide sequence ID" value="NC_012467.1"/>
</dbReference>
<dbReference type="SMR" id="C1CNE9"/>
<dbReference type="KEGG" id="spp:SPP_2228"/>
<dbReference type="HOGENOM" id="CLU_000022_2_12_9"/>
<dbReference type="UniPathway" id="UPA00556"/>
<dbReference type="GO" id="GO:0005737">
    <property type="term" value="C:cytoplasm"/>
    <property type="evidence" value="ECO:0007669"/>
    <property type="project" value="UniProtKB-SubCell"/>
</dbReference>
<dbReference type="GO" id="GO:0005524">
    <property type="term" value="F:ATP binding"/>
    <property type="evidence" value="ECO:0007669"/>
    <property type="project" value="UniProtKB-KW"/>
</dbReference>
<dbReference type="GO" id="GO:0047473">
    <property type="term" value="F:D-alanine [D-alanyl carrier protein] ligase activity"/>
    <property type="evidence" value="ECO:0007669"/>
    <property type="project" value="UniProtKB-UniRule"/>
</dbReference>
<dbReference type="GO" id="GO:0070395">
    <property type="term" value="P:lipoteichoic acid biosynthetic process"/>
    <property type="evidence" value="ECO:0007669"/>
    <property type="project" value="UniProtKB-UniRule"/>
</dbReference>
<dbReference type="CDD" id="cd05945">
    <property type="entry name" value="DltA"/>
    <property type="match status" value="1"/>
</dbReference>
<dbReference type="FunFam" id="3.30.300.30:FF:000012">
    <property type="entry name" value="D-alanine--D-alanyl carrier protein ligase"/>
    <property type="match status" value="1"/>
</dbReference>
<dbReference type="Gene3D" id="3.30.300.30">
    <property type="match status" value="1"/>
</dbReference>
<dbReference type="Gene3D" id="3.40.50.12780">
    <property type="entry name" value="N-terminal domain of ligase-like"/>
    <property type="match status" value="1"/>
</dbReference>
<dbReference type="HAMAP" id="MF_00593">
    <property type="entry name" value="DltA"/>
    <property type="match status" value="1"/>
</dbReference>
<dbReference type="InterPro" id="IPR010071">
    <property type="entry name" value="AA_adenyl_dom"/>
</dbReference>
<dbReference type="InterPro" id="IPR025110">
    <property type="entry name" value="AMP-bd_C"/>
</dbReference>
<dbReference type="InterPro" id="IPR045851">
    <property type="entry name" value="AMP-bd_C_sf"/>
</dbReference>
<dbReference type="InterPro" id="IPR020845">
    <property type="entry name" value="AMP-binding_CS"/>
</dbReference>
<dbReference type="InterPro" id="IPR000873">
    <property type="entry name" value="AMP-dep_synth/lig_dom"/>
</dbReference>
<dbReference type="InterPro" id="IPR042099">
    <property type="entry name" value="ANL_N_sf"/>
</dbReference>
<dbReference type="InterPro" id="IPR010072">
    <property type="entry name" value="DltA"/>
</dbReference>
<dbReference type="InterPro" id="IPR044507">
    <property type="entry name" value="DltA-like"/>
</dbReference>
<dbReference type="NCBIfam" id="TIGR01733">
    <property type="entry name" value="AA-adenyl-dom"/>
    <property type="match status" value="1"/>
</dbReference>
<dbReference type="NCBIfam" id="TIGR01734">
    <property type="entry name" value="D-ala-DACP-lig"/>
    <property type="match status" value="1"/>
</dbReference>
<dbReference type="NCBIfam" id="NF003417">
    <property type="entry name" value="PRK04813.1"/>
    <property type="match status" value="1"/>
</dbReference>
<dbReference type="PANTHER" id="PTHR45398">
    <property type="match status" value="1"/>
</dbReference>
<dbReference type="PANTHER" id="PTHR45398:SF1">
    <property type="entry name" value="ENZYME, PUTATIVE (JCVI)-RELATED"/>
    <property type="match status" value="1"/>
</dbReference>
<dbReference type="Pfam" id="PF00501">
    <property type="entry name" value="AMP-binding"/>
    <property type="match status" value="1"/>
</dbReference>
<dbReference type="Pfam" id="PF13193">
    <property type="entry name" value="AMP-binding_C"/>
    <property type="match status" value="1"/>
</dbReference>
<dbReference type="SUPFAM" id="SSF56801">
    <property type="entry name" value="Acetyl-CoA synthetase-like"/>
    <property type="match status" value="1"/>
</dbReference>
<dbReference type="PROSITE" id="PS00455">
    <property type="entry name" value="AMP_BINDING"/>
    <property type="match status" value="1"/>
</dbReference>
<feature type="chain" id="PRO_1000146976" description="D-alanine--D-alanyl carrier protein ligase">
    <location>
        <begin position="1"/>
        <end position="516"/>
    </location>
</feature>
<feature type="binding site" evidence="1">
    <location>
        <begin position="156"/>
        <end position="157"/>
    </location>
    <ligand>
        <name>ATP</name>
        <dbReference type="ChEBI" id="CHEBI:30616"/>
    </ligand>
</feature>
<feature type="binding site" evidence="1">
    <location>
        <position position="203"/>
    </location>
    <ligand>
        <name>D-alanine</name>
        <dbReference type="ChEBI" id="CHEBI:57416"/>
    </ligand>
</feature>
<feature type="binding site" evidence="1">
    <location>
        <begin position="298"/>
        <end position="303"/>
    </location>
    <ligand>
        <name>ATP</name>
        <dbReference type="ChEBI" id="CHEBI:30616"/>
    </ligand>
</feature>
<feature type="binding site" evidence="1">
    <location>
        <position position="307"/>
    </location>
    <ligand>
        <name>D-alanine</name>
        <dbReference type="ChEBI" id="CHEBI:57416"/>
    </ligand>
</feature>
<feature type="binding site" evidence="1">
    <location>
        <position position="389"/>
    </location>
    <ligand>
        <name>ATP</name>
        <dbReference type="ChEBI" id="CHEBI:30616"/>
    </ligand>
</feature>
<feature type="binding site" evidence="1">
    <location>
        <begin position="401"/>
        <end position="404"/>
    </location>
    <ligand>
        <name>ATP</name>
        <dbReference type="ChEBI" id="CHEBI:30616"/>
    </ligand>
</feature>
<feature type="binding site" evidence="1">
    <location>
        <position position="503"/>
    </location>
    <ligand>
        <name>ATP</name>
        <dbReference type="ChEBI" id="CHEBI:30616"/>
    </ligand>
</feature>
<feature type="binding site" evidence="1">
    <location>
        <position position="503"/>
    </location>
    <ligand>
        <name>D-alanine</name>
        <dbReference type="ChEBI" id="CHEBI:57416"/>
    </ligand>
</feature>
<keyword id="KW-0067">ATP-binding</keyword>
<keyword id="KW-0963">Cytoplasm</keyword>
<keyword id="KW-0436">Ligase</keyword>
<keyword id="KW-0547">Nucleotide-binding</keyword>
<gene>
    <name evidence="1" type="primary">dltA</name>
    <name type="ordered locus">SPP_2228</name>
</gene>
<name>DLTA_STRZP</name>
<protein>
    <recommendedName>
        <fullName evidence="1">D-alanine--D-alanyl carrier protein ligase</fullName>
        <shortName evidence="1">DCL</shortName>
        <ecNumber evidence="1">6.2.1.54</ecNumber>
    </recommendedName>
    <alternativeName>
        <fullName evidence="1">D-alanine--poly(phosphoribitol) ligase subunit 1</fullName>
    </alternativeName>
    <alternativeName>
        <fullName evidence="1">D-alanine-activating enzyme</fullName>
        <shortName evidence="1">DAE</shortName>
    </alternativeName>
</protein>
<reference key="1">
    <citation type="journal article" date="2010" name="Genome Biol.">
        <title>Structure and dynamics of the pan-genome of Streptococcus pneumoniae and closely related species.</title>
        <authorList>
            <person name="Donati C."/>
            <person name="Hiller N.L."/>
            <person name="Tettelin H."/>
            <person name="Muzzi A."/>
            <person name="Croucher N.J."/>
            <person name="Angiuoli S.V."/>
            <person name="Oggioni M."/>
            <person name="Dunning Hotopp J.C."/>
            <person name="Hu F.Z."/>
            <person name="Riley D.R."/>
            <person name="Covacci A."/>
            <person name="Mitchell T.J."/>
            <person name="Bentley S.D."/>
            <person name="Kilian M."/>
            <person name="Ehrlich G.D."/>
            <person name="Rappuoli R."/>
            <person name="Moxon E.R."/>
            <person name="Masignani V."/>
        </authorList>
    </citation>
    <scope>NUCLEOTIDE SEQUENCE [LARGE SCALE GENOMIC DNA]</scope>
    <source>
        <strain>P1031</strain>
    </source>
</reference>
<accession>C1CNE9</accession>
<proteinExistence type="inferred from homology"/>
<sequence length="516" mass="57427">MSNKPIADMIETIEHFAQTQPSYPVYNVLGQEHTYGDLKADSDSLAAVIDQLGLPEKSPVVVFGGQEYEMLATFVALTKSGHAYIPIDSHSALERVSAILEVAEPSLIIAISAFPLEQVSTPMINLAQVQEAFAQGNNYEITHPVKGDDNYYIIFTSGTTGKPKGVQISHDNLLSFTNWMITDKEFATPSRPQMLAQPPYSFDLSVMYWAPTLALGGTLFTLPSVITQDFKQLFAAIFSLPIAIWTSTPSFADMAMLSEYFNSEKMPGITHFYFDGEELTVKTAQKLRERFPNARIINAYGPTEATVALSAVAVTDEMLATLKRLPIGYTKADSPTFIIDEEGNKLPNGEQGEIIVSGPAVSKGYMNNPEKTAEAFFEFEDLPAYHTGDVGTMTDEGLLLYGGRMDFQIKFNGYRIELEDVSQNLNKSRFIESAVAVPRYNKDHKVQNLLAYVILKDGVREQFERDIDITKAIKEDLTDIMMSYMMPSKFLYRDSLPLTPNGKIDIKGLINEVNKR</sequence>